<gene>
    <name evidence="18" type="primary">CAMSAP2</name>
    <name evidence="18" type="synonym">CAMSAP1L1</name>
    <name evidence="14" type="synonym">KIAA1078</name>
</gene>
<sequence>MGDAADPREMRKTFIVPAIKPFDHYDFSRAKIACNLAWLVAKAFGTENVPEELQEPFYTDQYDQEHIKPPVVNLLLSAELYCRAGSLILKSDAAKPLLGHDAVIQALAQKGLYVTDQEKLVTERDLHKKPIQMSAHLAMIDTLMMAYTVEMVSIEKVIACAQQYSAFFQATDLPYDIEDAVMYWINKVNEHLKDIMEQEQKLKEHHTVEAPGGQKSPSKWFWKLVPARYRKEQTLLKQLPCIPLVENLLKDGTDGCALAALIHFYCPDVVRLEDICLKETMSLADSLYNLQLIQEFCQEYLNQCCHFTLEDMLYAASSIKSNYLVFMAELFWWFEVVKPSFVQPRVVRPQGAEPVKDMPSIPVLNAAKRNVLDSSSDFPSSGEGATFTQSHHHLPSRYSRPQAHSSASGGIRRSSSMSYVDGFIGTWPKEKRSSVHGVSFDISFDKEDSVQRSTPNRGITRSISNEGLTLNNSHVSKHIRKNLSFKPINGEEEAESIEEELNIDSHSDLKSCVPLNTNELNSNENIHYKLPNGALQNRILLDEFGNQIETPSIEEALQIIHDTEKSPHTPQPDQIANGFFLHSQEMSILNSNIKLNQSSPDNVTDTKGALSPITDNTEVDTGIHVPSEDIPETMDEDSSLRDYTVSLDSDMDDASKFLQDYDIRTGNTREALSPCPSTVSTKSQPGSSASSSSGVKMTSFAEQKFRKLNHTDGKSSGSSSQKTTPEGSELNIPHVVAWAQIPEETGLPQGRDTTQLLASEMVHLRMKLEEKRRAIEAQKKKMEAAFTKQRQKMGRTAFLTVVKKKGDGISPLREEAAGAEDEKVYTDRAKEKESQKTDGQRSKSLADIKESMENPQAKWLKSPTTPIDPEKQWNLASPSEETLNEGEILEYTKSIEKLNSSLHFLQQEMQRLSLQQEMLMQMREQQSWVISPPQPSPQKQIRDFKPSKQAGLSSAIAPFSSDSPRPTHPSPQSSNRKSASFSVKSQRTPRPNELKITPLNRTLTPPRSVDSLPRLRRFSPSQVPIQTRSFVCFGDDGEPQLKESKPKEEVKKEELESKGTLEQRGHNPEEKEIKPFESTVSEVLSLPVTETVCLTPNEDQLNQPTEPPPKPVFPPTAPKNVNLIEVSLSDLKPPEKADVPVEKYDGESDKEQFDDDQKVCCGFFFKDDQKAENDMAMKRAALLEKRLRREKETQLRKQQLEAEMEHKKEETRRKTEEERQKKEDERARREFIRQEYMRRKQLKLMEDMDTVIKPRPQVVKQKKQRPKSIHRDHIESPKTPIKGPPVSSLSLASLNTGDNESVHSGKRTPRSESVEGFLSPSRCGSRNGEKDWENASTTSSVASGTEYTGPKLYKEPSAKSNKHIIQNALAHCCLAGKVNEGQKKKILEEMEKSDANNFLILFRDSGCQFRSLYTYCPETEEINKLTGIGPKSITKKMIEGLYKYNSDRKQFSHIPAKTLSASVDAITIHSHLWQTKRPVTPKKLLPTKA</sequence>
<protein>
    <recommendedName>
        <fullName evidence="16">Calmodulin-regulated spectrin-associated protein 2</fullName>
    </recommendedName>
    <alternativeName>
        <fullName>Calmodulin-regulated spectrin-associated protein 1-like protein 1</fullName>
    </alternativeName>
</protein>
<evidence type="ECO:0000250" key="1">
    <source>
        <dbReference type="UniProtKB" id="Q8C1B1"/>
    </source>
</evidence>
<evidence type="ECO:0000255" key="2"/>
<evidence type="ECO:0000255" key="3">
    <source>
        <dbReference type="PROSITE-ProRule" id="PRU00044"/>
    </source>
</evidence>
<evidence type="ECO:0000255" key="4">
    <source>
        <dbReference type="PROSITE-ProRule" id="PRU00841"/>
    </source>
</evidence>
<evidence type="ECO:0000256" key="5">
    <source>
        <dbReference type="SAM" id="MobiDB-lite"/>
    </source>
</evidence>
<evidence type="ECO:0000269" key="6">
    <source>
    </source>
</evidence>
<evidence type="ECO:0000269" key="7">
    <source>
    </source>
</evidence>
<evidence type="ECO:0000269" key="8">
    <source>
    </source>
</evidence>
<evidence type="ECO:0000269" key="9">
    <source>
    </source>
</evidence>
<evidence type="ECO:0000269" key="10">
    <source>
    </source>
</evidence>
<evidence type="ECO:0000269" key="11">
    <source>
    </source>
</evidence>
<evidence type="ECO:0000269" key="12">
    <source>
    </source>
</evidence>
<evidence type="ECO:0000269" key="13">
    <source>
    </source>
</evidence>
<evidence type="ECO:0000303" key="14">
    <source>
    </source>
</evidence>
<evidence type="ECO:0000303" key="15">
    <source>
    </source>
</evidence>
<evidence type="ECO:0000305" key="16"/>
<evidence type="ECO:0000305" key="17">
    <source>
    </source>
</evidence>
<evidence type="ECO:0000312" key="18">
    <source>
        <dbReference type="HGNC" id="HGNC:29188"/>
    </source>
</evidence>
<evidence type="ECO:0007744" key="19">
    <source>
    </source>
</evidence>
<evidence type="ECO:0007744" key="20">
    <source>
    </source>
</evidence>
<evidence type="ECO:0007744" key="21">
    <source>
    </source>
</evidence>
<evidence type="ECO:0007744" key="22">
    <source>
    </source>
</evidence>
<evidence type="ECO:0007744" key="23">
    <source>
    </source>
</evidence>
<feature type="chain" id="PRO_0000316832" description="Calmodulin-regulated spectrin-associated protein 2">
    <location>
        <begin position="1"/>
        <end position="1489"/>
    </location>
</feature>
<feature type="domain" description="Calponin-homology (CH)" evidence="3">
    <location>
        <begin position="222"/>
        <end position="335"/>
    </location>
</feature>
<feature type="domain" description="CKK" evidence="4">
    <location>
        <begin position="1349"/>
        <end position="1483"/>
    </location>
</feature>
<feature type="region of interest" description="Disordered" evidence="5">
    <location>
        <begin position="375"/>
        <end position="415"/>
    </location>
</feature>
<feature type="region of interest" description="Disordered" evidence="5">
    <location>
        <begin position="611"/>
        <end position="639"/>
    </location>
</feature>
<feature type="region of interest" description="Disordered" evidence="5">
    <location>
        <begin position="668"/>
        <end position="730"/>
    </location>
</feature>
<feature type="region of interest" description="Disordered" evidence="5">
    <location>
        <begin position="812"/>
        <end position="844"/>
    </location>
</feature>
<feature type="region of interest" description="MBD region" evidence="8">
    <location>
        <begin position="922"/>
        <end position="1034"/>
    </location>
</feature>
<feature type="region of interest" description="Disordered" evidence="5">
    <location>
        <begin position="925"/>
        <end position="1017"/>
    </location>
</feature>
<feature type="region of interest" description="Disordered" evidence="5">
    <location>
        <begin position="1032"/>
        <end position="1078"/>
    </location>
</feature>
<feature type="region of interest" description="Disordered" evidence="5">
    <location>
        <begin position="1096"/>
        <end position="1152"/>
    </location>
</feature>
<feature type="region of interest" description="Disordered" evidence="5">
    <location>
        <begin position="1191"/>
        <end position="1349"/>
    </location>
</feature>
<feature type="coiled-coil region" evidence="2">
    <location>
        <begin position="756"/>
        <end position="793"/>
    </location>
</feature>
<feature type="coiled-coil region" evidence="2">
    <location>
        <begin position="887"/>
        <end position="926"/>
    </location>
</feature>
<feature type="coiled-coil region" evidence="2">
    <location>
        <begin position="1166"/>
        <end position="1238"/>
    </location>
</feature>
<feature type="compositionally biased region" description="Low complexity" evidence="5">
    <location>
        <begin position="405"/>
        <end position="415"/>
    </location>
</feature>
<feature type="compositionally biased region" description="Polar residues" evidence="5">
    <location>
        <begin position="668"/>
        <end position="679"/>
    </location>
</feature>
<feature type="compositionally biased region" description="Low complexity" evidence="5">
    <location>
        <begin position="680"/>
        <end position="699"/>
    </location>
</feature>
<feature type="compositionally biased region" description="Basic and acidic residues" evidence="5">
    <location>
        <begin position="703"/>
        <end position="713"/>
    </location>
</feature>
<feature type="compositionally biased region" description="Polar residues" evidence="5">
    <location>
        <begin position="960"/>
        <end position="989"/>
    </location>
</feature>
<feature type="compositionally biased region" description="Basic and acidic residues" evidence="5">
    <location>
        <begin position="1039"/>
        <end position="1075"/>
    </location>
</feature>
<feature type="compositionally biased region" description="Pro residues" evidence="5">
    <location>
        <begin position="1105"/>
        <end position="1117"/>
    </location>
</feature>
<feature type="compositionally biased region" description="Basic and acidic residues" evidence="5">
    <location>
        <begin position="1132"/>
        <end position="1152"/>
    </location>
</feature>
<feature type="compositionally biased region" description="Basic and acidic residues" evidence="5">
    <location>
        <begin position="1191"/>
        <end position="1252"/>
    </location>
</feature>
<feature type="compositionally biased region" description="Polar residues" evidence="5">
    <location>
        <begin position="1287"/>
        <end position="1299"/>
    </location>
</feature>
<feature type="compositionally biased region" description="Polar residues" evidence="5">
    <location>
        <begin position="1334"/>
        <end position="1346"/>
    </location>
</feature>
<feature type="modified residue" description="Phosphoserine" evidence="23">
    <location>
        <position position="416"/>
    </location>
</feature>
<feature type="modified residue" description="Phosphoserine" evidence="1">
    <location>
        <position position="418"/>
    </location>
</feature>
<feature type="modified residue" description="Phosphothreonine" evidence="1">
    <location>
        <position position="426"/>
    </location>
</feature>
<feature type="modified residue" description="Phosphoserine" evidence="20 21 22 23">
    <location>
        <position position="464"/>
    </location>
</feature>
<feature type="modified residue" description="Phosphoserine" evidence="20">
    <location>
        <position position="598"/>
    </location>
</feature>
<feature type="modified residue" description="Phosphoserine" evidence="20 21 22 23">
    <location>
        <position position="599"/>
    </location>
</feature>
<feature type="modified residue" description="Phosphoserine" evidence="1">
    <location>
        <position position="611"/>
    </location>
</feature>
<feature type="modified residue" description="Phosphoserine" evidence="20 23">
    <location>
        <position position="673"/>
    </location>
</feature>
<feature type="modified residue" description="Phosphothreonine" evidence="1">
    <location>
        <position position="678"/>
    </location>
</feature>
<feature type="modified residue" description="Phosphoserine" evidence="1">
    <location>
        <position position="680"/>
    </location>
</feature>
<feature type="modified residue" description="Phosphoserine" evidence="23">
    <location>
        <position position="862"/>
    </location>
</feature>
<feature type="modified residue" description="Phosphoserine" evidence="19 20 21 23">
    <location>
        <position position="931"/>
    </location>
</feature>
<feature type="modified residue" description="Phosphoserine" evidence="19 20 21">
    <location>
        <position position="936"/>
    </location>
</feature>
<feature type="modified residue" description="Phosphothreonine" evidence="20">
    <location>
        <position position="997"/>
    </location>
</feature>
<feature type="modified residue" description="Phosphothreonine" evidence="20">
    <location>
        <position position="1002"/>
    </location>
</feature>
<feature type="modified residue" description="Phosphothreonine" evidence="20">
    <location>
        <position position="1004"/>
    </location>
</feature>
<feature type="modified residue" description="Phosphoserine" evidence="20">
    <location>
        <position position="1008"/>
    </location>
</feature>
<feature type="modified residue" description="Phosphoserine" evidence="20">
    <location>
        <position position="1019"/>
    </location>
</feature>
<feature type="modified residue" description="Phosphoserine" evidence="21 23">
    <location>
        <position position="1148"/>
    </location>
</feature>
<feature type="modified residue" description="Phosphoserine" evidence="19 20 23">
    <location>
        <position position="1313"/>
    </location>
</feature>
<feature type="modified residue" description="Phosphoserine" evidence="19 20 21 23">
    <location>
        <position position="1319"/>
    </location>
</feature>
<feature type="modified residue" description="Phosphoserine" evidence="23">
    <location>
        <position position="1321"/>
    </location>
</feature>
<feature type="splice variant" id="VSP_030805" description="In isoform 2 and isoform 3." evidence="15">
    <location>
        <begin position="216"/>
        <end position="226"/>
    </location>
</feature>
<feature type="splice variant" id="VSP_030806" description="In isoform 2." evidence="15">
    <location>
        <begin position="380"/>
        <end position="395"/>
    </location>
</feature>
<feature type="sequence variant" id="VAR_038399" description="In a colorectal cancer sample; somatic mutation." evidence="6">
    <original>I</original>
    <variation>L</variation>
    <location>
        <position position="361"/>
    </location>
</feature>
<feature type="sequence variant" id="VAR_038400" description="In dbSNP:rs3753952.">
    <original>P</original>
    <variation>L</variation>
    <location>
        <position position="958"/>
    </location>
</feature>
<feature type="sequence variant" id="VAR_057796" description="In dbSNP:rs3753952.">
    <original>P</original>
    <variation>L</variation>
    <location>
        <position position="969"/>
    </location>
</feature>
<feature type="sequence variant" id="VAR_038401" description="In dbSNP:rs6674599.">
    <original>R</original>
    <variation>P</variation>
    <location>
        <position position="1028"/>
    </location>
</feature>
<feature type="sequence variant" id="VAR_057797" description="In dbSNP:rs6674599.">
    <original>P</original>
    <variation>R</variation>
    <location>
        <position position="1039"/>
    </location>
</feature>
<feature type="sequence conflict" description="In Ref. 4; BAA83030." evidence="16" ref="4">
    <original>E</original>
    <variation>K</variation>
    <location>
        <position position="150"/>
    </location>
</feature>
<feature type="sequence conflict" description="In Ref. 3; AAH56910." evidence="16" ref="3">
    <original>Q</original>
    <variation>K</variation>
    <location>
        <position position="1261"/>
    </location>
</feature>
<organism>
    <name type="scientific">Homo sapiens</name>
    <name type="common">Human</name>
    <dbReference type="NCBI Taxonomy" id="9606"/>
    <lineage>
        <taxon>Eukaryota</taxon>
        <taxon>Metazoa</taxon>
        <taxon>Chordata</taxon>
        <taxon>Craniata</taxon>
        <taxon>Vertebrata</taxon>
        <taxon>Euteleostomi</taxon>
        <taxon>Mammalia</taxon>
        <taxon>Eutheria</taxon>
        <taxon>Euarchontoglires</taxon>
        <taxon>Primates</taxon>
        <taxon>Haplorrhini</taxon>
        <taxon>Catarrhini</taxon>
        <taxon>Hominidae</taxon>
        <taxon>Homo</taxon>
    </lineage>
</organism>
<reference key="1">
    <citation type="journal article" date="2006" name="Nature">
        <title>The DNA sequence and biological annotation of human chromosome 1.</title>
        <authorList>
            <person name="Gregory S.G."/>
            <person name="Barlow K.F."/>
            <person name="McLay K.E."/>
            <person name="Kaul R."/>
            <person name="Swarbreck D."/>
            <person name="Dunham A."/>
            <person name="Scott C.E."/>
            <person name="Howe K.L."/>
            <person name="Woodfine K."/>
            <person name="Spencer C.C.A."/>
            <person name="Jones M.C."/>
            <person name="Gillson C."/>
            <person name="Searle S."/>
            <person name="Zhou Y."/>
            <person name="Kokocinski F."/>
            <person name="McDonald L."/>
            <person name="Evans R."/>
            <person name="Phillips K."/>
            <person name="Atkinson A."/>
            <person name="Cooper R."/>
            <person name="Jones C."/>
            <person name="Hall R.E."/>
            <person name="Andrews T.D."/>
            <person name="Lloyd C."/>
            <person name="Ainscough R."/>
            <person name="Almeida J.P."/>
            <person name="Ambrose K.D."/>
            <person name="Anderson F."/>
            <person name="Andrew R.W."/>
            <person name="Ashwell R.I.S."/>
            <person name="Aubin K."/>
            <person name="Babbage A.K."/>
            <person name="Bagguley C.L."/>
            <person name="Bailey J."/>
            <person name="Beasley H."/>
            <person name="Bethel G."/>
            <person name="Bird C.P."/>
            <person name="Bray-Allen S."/>
            <person name="Brown J.Y."/>
            <person name="Brown A.J."/>
            <person name="Buckley D."/>
            <person name="Burton J."/>
            <person name="Bye J."/>
            <person name="Carder C."/>
            <person name="Chapman J.C."/>
            <person name="Clark S.Y."/>
            <person name="Clarke G."/>
            <person name="Clee C."/>
            <person name="Cobley V."/>
            <person name="Collier R.E."/>
            <person name="Corby N."/>
            <person name="Coville G.J."/>
            <person name="Davies J."/>
            <person name="Deadman R."/>
            <person name="Dunn M."/>
            <person name="Earthrowl M."/>
            <person name="Ellington A.G."/>
            <person name="Errington H."/>
            <person name="Frankish A."/>
            <person name="Frankland J."/>
            <person name="French L."/>
            <person name="Garner P."/>
            <person name="Garnett J."/>
            <person name="Gay L."/>
            <person name="Ghori M.R.J."/>
            <person name="Gibson R."/>
            <person name="Gilby L.M."/>
            <person name="Gillett W."/>
            <person name="Glithero R.J."/>
            <person name="Grafham D.V."/>
            <person name="Griffiths C."/>
            <person name="Griffiths-Jones S."/>
            <person name="Grocock R."/>
            <person name="Hammond S."/>
            <person name="Harrison E.S.I."/>
            <person name="Hart E."/>
            <person name="Haugen E."/>
            <person name="Heath P.D."/>
            <person name="Holmes S."/>
            <person name="Holt K."/>
            <person name="Howden P.J."/>
            <person name="Hunt A.R."/>
            <person name="Hunt S.E."/>
            <person name="Hunter G."/>
            <person name="Isherwood J."/>
            <person name="James R."/>
            <person name="Johnson C."/>
            <person name="Johnson D."/>
            <person name="Joy A."/>
            <person name="Kay M."/>
            <person name="Kershaw J.K."/>
            <person name="Kibukawa M."/>
            <person name="Kimberley A.M."/>
            <person name="King A."/>
            <person name="Knights A.J."/>
            <person name="Lad H."/>
            <person name="Laird G."/>
            <person name="Lawlor S."/>
            <person name="Leongamornlert D.A."/>
            <person name="Lloyd D.M."/>
            <person name="Loveland J."/>
            <person name="Lovell J."/>
            <person name="Lush M.J."/>
            <person name="Lyne R."/>
            <person name="Martin S."/>
            <person name="Mashreghi-Mohammadi M."/>
            <person name="Matthews L."/>
            <person name="Matthews N.S.W."/>
            <person name="McLaren S."/>
            <person name="Milne S."/>
            <person name="Mistry S."/>
            <person name="Moore M.J.F."/>
            <person name="Nickerson T."/>
            <person name="O'Dell C.N."/>
            <person name="Oliver K."/>
            <person name="Palmeiri A."/>
            <person name="Palmer S.A."/>
            <person name="Parker A."/>
            <person name="Patel D."/>
            <person name="Pearce A.V."/>
            <person name="Peck A.I."/>
            <person name="Pelan S."/>
            <person name="Phelps K."/>
            <person name="Phillimore B.J."/>
            <person name="Plumb R."/>
            <person name="Rajan J."/>
            <person name="Raymond C."/>
            <person name="Rouse G."/>
            <person name="Saenphimmachak C."/>
            <person name="Sehra H.K."/>
            <person name="Sheridan E."/>
            <person name="Shownkeen R."/>
            <person name="Sims S."/>
            <person name="Skuce C.D."/>
            <person name="Smith M."/>
            <person name="Steward C."/>
            <person name="Subramanian S."/>
            <person name="Sycamore N."/>
            <person name="Tracey A."/>
            <person name="Tromans A."/>
            <person name="Van Helmond Z."/>
            <person name="Wall M."/>
            <person name="Wallis J.M."/>
            <person name="White S."/>
            <person name="Whitehead S.L."/>
            <person name="Wilkinson J.E."/>
            <person name="Willey D.L."/>
            <person name="Williams H."/>
            <person name="Wilming L."/>
            <person name="Wray P.W."/>
            <person name="Wu Z."/>
            <person name="Coulson A."/>
            <person name="Vaudin M."/>
            <person name="Sulston J.E."/>
            <person name="Durbin R.M."/>
            <person name="Hubbard T."/>
            <person name="Wooster R."/>
            <person name="Dunham I."/>
            <person name="Carter N.P."/>
            <person name="McVean G."/>
            <person name="Ross M.T."/>
            <person name="Harrow J."/>
            <person name="Olson M.V."/>
            <person name="Beck S."/>
            <person name="Rogers J."/>
            <person name="Bentley D.R."/>
        </authorList>
    </citation>
    <scope>NUCLEOTIDE SEQUENCE [LARGE SCALE GENOMIC DNA]</scope>
</reference>
<reference key="2">
    <citation type="submission" date="2005-07" db="EMBL/GenBank/DDBJ databases">
        <authorList>
            <person name="Mural R.J."/>
            <person name="Istrail S."/>
            <person name="Sutton G.G."/>
            <person name="Florea L."/>
            <person name="Halpern A.L."/>
            <person name="Mobarry C.M."/>
            <person name="Lippert R."/>
            <person name="Walenz B."/>
            <person name="Shatkay H."/>
            <person name="Dew I."/>
            <person name="Miller J.R."/>
            <person name="Flanigan M.J."/>
            <person name="Edwards N.J."/>
            <person name="Bolanos R."/>
            <person name="Fasulo D."/>
            <person name="Halldorsson B.V."/>
            <person name="Hannenhalli S."/>
            <person name="Turner R."/>
            <person name="Yooseph S."/>
            <person name="Lu F."/>
            <person name="Nusskern D.R."/>
            <person name="Shue B.C."/>
            <person name="Zheng X.H."/>
            <person name="Zhong F."/>
            <person name="Delcher A.L."/>
            <person name="Huson D.H."/>
            <person name="Kravitz S.A."/>
            <person name="Mouchard L."/>
            <person name="Reinert K."/>
            <person name="Remington K.A."/>
            <person name="Clark A.G."/>
            <person name="Waterman M.S."/>
            <person name="Eichler E.E."/>
            <person name="Adams M.D."/>
            <person name="Hunkapiller M.W."/>
            <person name="Myers E.W."/>
            <person name="Venter J.C."/>
        </authorList>
    </citation>
    <scope>NUCLEOTIDE SEQUENCE [LARGE SCALE GENOMIC DNA]</scope>
</reference>
<reference key="3">
    <citation type="journal article" date="2004" name="Genome Res.">
        <title>The status, quality, and expansion of the NIH full-length cDNA project: the Mammalian Gene Collection (MGC).</title>
        <authorList>
            <consortium name="The MGC Project Team"/>
        </authorList>
    </citation>
    <scope>NUCLEOTIDE SEQUENCE [LARGE SCALE MRNA] (ISOFORMS 1 AND 2)</scope>
    <source>
        <tissue>Eye</tissue>
    </source>
</reference>
<reference key="4">
    <citation type="journal article" date="1999" name="DNA Res.">
        <title>Prediction of the coding sequences of unidentified human genes. XIV. The complete sequences of 100 new cDNA clones from brain which code for large proteins in vitro.</title>
        <authorList>
            <person name="Kikuno R."/>
            <person name="Nagase T."/>
            <person name="Ishikawa K."/>
            <person name="Hirosawa M."/>
            <person name="Miyajima N."/>
            <person name="Tanaka A."/>
            <person name="Kotani H."/>
            <person name="Nomura N."/>
            <person name="Ohara O."/>
        </authorList>
    </citation>
    <scope>NUCLEOTIDE SEQUENCE [LARGE SCALE MRNA] OF 125-1489 (ISOFORM 1)</scope>
    <source>
        <tissue>Brain</tissue>
    </source>
</reference>
<reference key="5">
    <citation type="journal article" date="2002" name="DNA Res.">
        <title>Construction of expression-ready cDNA clones for KIAA genes: manual curation of 330 KIAA cDNA clones.</title>
        <authorList>
            <person name="Nakajima D."/>
            <person name="Okazaki N."/>
            <person name="Yamakawa H."/>
            <person name="Kikuno R."/>
            <person name="Ohara O."/>
            <person name="Nagase T."/>
        </authorList>
    </citation>
    <scope>SEQUENCE REVISION</scope>
</reference>
<reference key="6">
    <citation type="journal article" date="2007" name="BMC Genomics">
        <title>The full-ORF clone resource of the German cDNA consortium.</title>
        <authorList>
            <person name="Bechtel S."/>
            <person name="Rosenfelder H."/>
            <person name="Duda A."/>
            <person name="Schmidt C.P."/>
            <person name="Ernst U."/>
            <person name="Wellenreuther R."/>
            <person name="Mehrle A."/>
            <person name="Schuster C."/>
            <person name="Bahr A."/>
            <person name="Bloecker H."/>
            <person name="Heubner D."/>
            <person name="Hoerlein A."/>
            <person name="Michel G."/>
            <person name="Wedler H."/>
            <person name="Koehrer K."/>
            <person name="Ottenwaelder B."/>
            <person name="Poustka A."/>
            <person name="Wiemann S."/>
            <person name="Schupp I."/>
        </authorList>
    </citation>
    <scope>NUCLEOTIDE SEQUENCE [LARGE SCALE MRNA] OF 1288-1489 (ISOFORM 1)</scope>
    <source>
        <tissue>Uterus</tissue>
    </source>
</reference>
<reference key="7">
    <citation type="journal article" date="2006" name="Nat. Biotechnol.">
        <title>A probability-based approach for high-throughput protein phosphorylation analysis and site localization.</title>
        <authorList>
            <person name="Beausoleil S.A."/>
            <person name="Villen J."/>
            <person name="Gerber S.A."/>
            <person name="Rush J."/>
            <person name="Gygi S.P."/>
        </authorList>
    </citation>
    <scope>PHOSPHORYLATION [LARGE SCALE ANALYSIS] AT SER-931; SER-936; SER-1313 AND SER-1319</scope>
    <scope>IDENTIFICATION BY MASS SPECTROMETRY [LARGE SCALE ANALYSIS]</scope>
    <source>
        <tissue>Cervix carcinoma</tissue>
    </source>
</reference>
<reference key="8">
    <citation type="journal article" date="2008" name="J. Proteome Res.">
        <title>Combining protein-based IMAC, peptide-based IMAC, and MudPIT for efficient phosphoproteomic analysis.</title>
        <authorList>
            <person name="Cantin G.T."/>
            <person name="Yi W."/>
            <person name="Lu B."/>
            <person name="Park S.K."/>
            <person name="Xu T."/>
            <person name="Lee J.-D."/>
            <person name="Yates J.R. III"/>
        </authorList>
    </citation>
    <scope>IDENTIFICATION BY MASS SPECTROMETRY [LARGE SCALE ANALYSIS]</scope>
    <source>
        <tissue>Cervix carcinoma</tissue>
    </source>
</reference>
<reference key="9">
    <citation type="journal article" date="2008" name="Proc. Natl. Acad. Sci. U.S.A.">
        <title>A quantitative atlas of mitotic phosphorylation.</title>
        <authorList>
            <person name="Dephoure N."/>
            <person name="Zhou C."/>
            <person name="Villen J."/>
            <person name="Beausoleil S.A."/>
            <person name="Bakalarski C.E."/>
            <person name="Elledge S.J."/>
            <person name="Gygi S.P."/>
        </authorList>
    </citation>
    <scope>PHOSPHORYLATION [LARGE SCALE ANALYSIS] AT SER-464; SER-598; SER-599; SER-673; SER-931; SER-936; THR-997; THR-1002; THR-1004; SER-1008; SER-1019; SER-1313 AND SER-1319</scope>
    <scope>IDENTIFICATION BY MASS SPECTROMETRY [LARGE SCALE ANALYSIS]</scope>
    <source>
        <tissue>Cervix carcinoma</tissue>
    </source>
</reference>
<reference key="10">
    <citation type="journal article" date="2009" name="Anal. Chem.">
        <title>Lys-N and trypsin cover complementary parts of the phosphoproteome in a refined SCX-based approach.</title>
        <authorList>
            <person name="Gauci S."/>
            <person name="Helbig A.O."/>
            <person name="Slijper M."/>
            <person name="Krijgsveld J."/>
            <person name="Heck A.J."/>
            <person name="Mohammed S."/>
        </authorList>
    </citation>
    <scope>IDENTIFICATION BY MASS SPECTROMETRY [LARGE SCALE ANALYSIS]</scope>
</reference>
<reference key="11">
    <citation type="journal article" date="2009" name="Sci. Signal.">
        <title>Quantitative phosphoproteomic analysis of T cell receptor signaling reveals system-wide modulation of protein-protein interactions.</title>
        <authorList>
            <person name="Mayya V."/>
            <person name="Lundgren D.H."/>
            <person name="Hwang S.-I."/>
            <person name="Rezaul K."/>
            <person name="Wu L."/>
            <person name="Eng J.K."/>
            <person name="Rodionov V."/>
            <person name="Han D.K."/>
        </authorList>
    </citation>
    <scope>IDENTIFICATION BY MASS SPECTROMETRY [LARGE SCALE ANALYSIS]</scope>
    <source>
        <tissue>Leukemic T-cell</tissue>
    </source>
</reference>
<reference key="12">
    <citation type="journal article" date="2010" name="Sci. Signal.">
        <title>Quantitative phosphoproteomics reveals widespread full phosphorylation site occupancy during mitosis.</title>
        <authorList>
            <person name="Olsen J.V."/>
            <person name="Vermeulen M."/>
            <person name="Santamaria A."/>
            <person name="Kumar C."/>
            <person name="Miller M.L."/>
            <person name="Jensen L.J."/>
            <person name="Gnad F."/>
            <person name="Cox J."/>
            <person name="Jensen T.S."/>
            <person name="Nigg E.A."/>
            <person name="Brunak S."/>
            <person name="Mann M."/>
        </authorList>
    </citation>
    <scope>PHOSPHORYLATION [LARGE SCALE ANALYSIS] AT SER-464; SER-599; SER-931; SER-936; SER-1148 AND SER-1319</scope>
    <scope>IDENTIFICATION BY MASS SPECTROMETRY [LARGE SCALE ANALYSIS]</scope>
    <source>
        <tissue>Cervix carcinoma</tissue>
    </source>
</reference>
<reference key="13">
    <citation type="journal article" date="2011" name="BMC Syst. Biol.">
        <title>Initial characterization of the human central proteome.</title>
        <authorList>
            <person name="Burkard T.R."/>
            <person name="Planyavsky M."/>
            <person name="Kaupe I."/>
            <person name="Breitwieser F.P."/>
            <person name="Buerckstuemmer T."/>
            <person name="Bennett K.L."/>
            <person name="Superti-Furga G."/>
            <person name="Colinge J."/>
        </authorList>
    </citation>
    <scope>IDENTIFICATION BY MASS SPECTROMETRY [LARGE SCALE ANALYSIS]</scope>
</reference>
<reference key="14">
    <citation type="journal article" date="2011" name="Sci. Signal.">
        <title>System-wide temporal characterization of the proteome and phosphoproteome of human embryonic stem cell differentiation.</title>
        <authorList>
            <person name="Rigbolt K.T."/>
            <person name="Prokhorova T.A."/>
            <person name="Akimov V."/>
            <person name="Henningsen J."/>
            <person name="Johansen P.T."/>
            <person name="Kratchmarova I."/>
            <person name="Kassem M."/>
            <person name="Mann M."/>
            <person name="Olsen J.V."/>
            <person name="Blagoev B."/>
        </authorList>
    </citation>
    <scope>PHOSPHORYLATION [LARGE SCALE ANALYSIS] AT SER-464 AND SER-599</scope>
    <scope>IDENTIFICATION BY MASS SPECTROMETRY [LARGE SCALE ANALYSIS]</scope>
</reference>
<reference key="15">
    <citation type="journal article" date="2012" name="Hum. Mol. Genet.">
        <title>Two-stage genome-wide association study identifies variants in CAMSAP1L1 as susceptibility loci for epilepsy in Chinese.</title>
        <authorList>
            <person name="Guo Y."/>
            <person name="Baum L.W."/>
            <person name="Sham P.C."/>
            <person name="Wong V."/>
            <person name="Ng P.W."/>
            <person name="Lui C.H."/>
            <person name="Sin N.C."/>
            <person name="Tsoi T.H."/>
            <person name="Tang C.S."/>
            <person name="Kwan J.S."/>
            <person name="Yip B.H."/>
            <person name="Xiao S.M."/>
            <person name="Thomas G.N."/>
            <person name="Lau Y.L."/>
            <person name="Yang W."/>
            <person name="Cherny S.S."/>
            <person name="Kwan P."/>
        </authorList>
    </citation>
    <scope>POSSIBLE INVOLVEMENT IN EPILEPSY</scope>
</reference>
<reference key="16">
    <citation type="journal article" date="2012" name="Proc. Natl. Acad. Sci. U.S.A.">
        <title>Nezha/CAMSAP3 and CAMSAP2 cooperate in epithelial-specific organization of noncentrosomal microtubules.</title>
        <authorList>
            <person name="Tanaka N."/>
            <person name="Meng W."/>
            <person name="Nagae S."/>
            <person name="Takeichi M."/>
        </authorList>
    </citation>
    <scope>FUNCTION</scope>
    <scope>MICROTUBULE-BINDING</scope>
    <scope>SUBCELLULAR LOCATION</scope>
</reference>
<reference key="17">
    <citation type="journal article" date="2013" name="J. Proteome Res.">
        <title>Toward a comprehensive characterization of a human cancer cell phosphoproteome.</title>
        <authorList>
            <person name="Zhou H."/>
            <person name="Di Palma S."/>
            <person name="Preisinger C."/>
            <person name="Peng M."/>
            <person name="Polat A.N."/>
            <person name="Heck A.J."/>
            <person name="Mohammed S."/>
        </authorList>
    </citation>
    <scope>PHOSPHORYLATION [LARGE SCALE ANALYSIS] AT SER-416; SER-464; SER-599; SER-673; SER-862; SER-931; SER-1148; SER-1313; SER-1319 AND SER-1321</scope>
    <scope>IDENTIFICATION BY MASS SPECTROMETRY [LARGE SCALE ANALYSIS]</scope>
    <source>
        <tissue>Cervix carcinoma</tissue>
        <tissue>Erythroleukemia</tissue>
    </source>
</reference>
<reference key="18">
    <citation type="journal article" date="2014" name="Dev. Cell">
        <title>Microtubule minus-end stabilization by polymerization-driven CAMSAP deposition.</title>
        <authorList>
            <person name="Jiang K."/>
            <person name="Hua S."/>
            <person name="Mohan R."/>
            <person name="Grigoriev I."/>
            <person name="Yau K.W."/>
            <person name="Liu Q."/>
            <person name="Katrukha E.A."/>
            <person name="Altelaar A.F."/>
            <person name="Heck A.J."/>
            <person name="Hoogenraad C.C."/>
            <person name="Akhmanova A."/>
        </authorList>
    </citation>
    <scope>FUNCTION</scope>
    <scope>SUBCELLULAR LOCATION</scope>
    <scope>DOMAIN</scope>
    <scope>INTERACTION WITH KATNA1 AND KATNB1</scope>
</reference>
<reference key="19">
    <citation type="journal article" date="2014" name="Neuron">
        <title>Microtubule minus-end binding protein CAMSAP2 controls axon specification and dendrite development.</title>
        <authorList>
            <person name="Yau K.W."/>
            <person name="van Beuningen S.F."/>
            <person name="Cunha-Ferreira I."/>
            <person name="Cloin B.M."/>
            <person name="van Battum E.Y."/>
            <person name="Will L."/>
            <person name="Schaetzle P."/>
            <person name="Tas R.P."/>
            <person name="van Krugten J."/>
            <person name="Katrukha E.A."/>
            <person name="Jiang K."/>
            <person name="Wulf P.S."/>
            <person name="Mikhaylova M."/>
            <person name="Harterink M."/>
            <person name="Pasterkamp R.J."/>
            <person name="Akhmanova A."/>
            <person name="Kapitein L.C."/>
            <person name="Hoogenraad C.C."/>
        </authorList>
    </citation>
    <scope>FUNCTION</scope>
    <scope>SUBCELLULAR LOCATION</scope>
</reference>
<reference key="20">
    <citation type="journal article" date="2014" name="Proc. Natl. Acad. Sci. U.S.A.">
        <title>Regulation of microtubule minus-end dynamics by CAMSAPs and Patronin.</title>
        <authorList>
            <person name="Hendershott M.C."/>
            <person name="Vale R.D."/>
        </authorList>
    </citation>
    <scope>FUNCTION</scope>
    <scope>SUBCELLULAR LOCATION</scope>
</reference>
<reference key="21">
    <citation type="journal article" date="2016" name="Dev. Cell">
        <title>Molecular pathway of microtubule organization at the Golgi apparatus.</title>
        <authorList>
            <person name="Wu J."/>
            <person name="de Heus C."/>
            <person name="Liu Q."/>
            <person name="Bouchet B.P."/>
            <person name="Noordstra I."/>
            <person name="Jiang K."/>
            <person name="Hua S."/>
            <person name="Martin M."/>
            <person name="Yang C."/>
            <person name="Grigoriev I."/>
            <person name="Katrukha E.A."/>
            <person name="Altelaar A.F."/>
            <person name="Hoogenraad C.C."/>
            <person name="Qi R.Z."/>
            <person name="Klumperman J."/>
            <person name="Akhmanova A."/>
        </authorList>
    </citation>
    <scope>FUNCTION</scope>
    <scope>SUBCELLULAR LOCATION</scope>
    <scope>INTERACTION WITH AKAP9 AND PDE4DIP</scope>
</reference>
<reference key="22">
    <citation type="journal article" date="2017" name="FEBS Lett.">
        <title>Noncentrosomal microtubules regulate autophagosome transport through CAMSAP2-EB1 cross-talk.</title>
        <authorList>
            <person name="Wei J."/>
            <person name="Xu H."/>
            <person name="Meng W."/>
        </authorList>
    </citation>
    <scope>FUNCTION</scope>
    <scope>INTERACTION WITH MAPRE1</scope>
</reference>
<reference key="23">
    <citation type="journal article" date="2017" name="J. Cell Biol.">
        <title>EB1 and EB3 regulate microtubule minus end organization and Golgi morphology.</title>
        <authorList>
            <person name="Yang C."/>
            <person name="Wu J."/>
            <person name="de Heus C."/>
            <person name="Grigoriev I."/>
            <person name="Liv N."/>
            <person name="Yao Y."/>
            <person name="Smal I."/>
            <person name="Meijering E."/>
            <person name="Klumperman J."/>
            <person name="Qi R.Z."/>
            <person name="Akhmanova A."/>
        </authorList>
    </citation>
    <scope>SUBCELLULAR LOCATION</scope>
    <scope>INTERACTION WITH MAPRE1; AKAP9 AND PDE4DIP</scope>
</reference>
<reference key="24">
    <citation type="journal article" date="2006" name="Science">
        <title>The consensus coding sequences of human breast and colorectal cancers.</title>
        <authorList>
            <person name="Sjoeblom T."/>
            <person name="Jones S."/>
            <person name="Wood L.D."/>
            <person name="Parsons D.W."/>
            <person name="Lin J."/>
            <person name="Barber T.D."/>
            <person name="Mandelker D."/>
            <person name="Leary R.J."/>
            <person name="Ptak J."/>
            <person name="Silliman N."/>
            <person name="Szabo S."/>
            <person name="Buckhaults P."/>
            <person name="Farrell C."/>
            <person name="Meeh P."/>
            <person name="Markowitz S.D."/>
            <person name="Willis J."/>
            <person name="Dawson D."/>
            <person name="Willson J.K.V."/>
            <person name="Gazdar A.F."/>
            <person name="Hartigan J."/>
            <person name="Wu L."/>
            <person name="Liu C."/>
            <person name="Parmigiani G."/>
            <person name="Park B.H."/>
            <person name="Bachman K.E."/>
            <person name="Papadopoulos N."/>
            <person name="Vogelstein B."/>
            <person name="Kinzler K.W."/>
            <person name="Velculescu V.E."/>
        </authorList>
    </citation>
    <scope>VARIANT [LARGE SCALE ANALYSIS] LEU-361</scope>
</reference>
<name>CAMP2_HUMAN</name>
<dbReference type="EMBL" id="AL450104">
    <property type="status" value="NOT_ANNOTATED_CDS"/>
    <property type="molecule type" value="Genomic_DNA"/>
</dbReference>
<dbReference type="EMBL" id="CH471067">
    <property type="protein sequence ID" value="EAW91320.1"/>
    <property type="molecule type" value="Genomic_DNA"/>
</dbReference>
<dbReference type="EMBL" id="BC011385">
    <property type="protein sequence ID" value="AAH11385.1"/>
    <property type="molecule type" value="mRNA"/>
</dbReference>
<dbReference type="EMBL" id="BC056910">
    <property type="protein sequence ID" value="AAH56910.1"/>
    <property type="status" value="ALT_INIT"/>
    <property type="molecule type" value="mRNA"/>
</dbReference>
<dbReference type="EMBL" id="BC125229">
    <property type="protein sequence ID" value="AAI25230.1"/>
    <property type="molecule type" value="mRNA"/>
</dbReference>
<dbReference type="EMBL" id="BC125230">
    <property type="protein sequence ID" value="AAI25231.1"/>
    <property type="molecule type" value="mRNA"/>
</dbReference>
<dbReference type="EMBL" id="AB029001">
    <property type="protein sequence ID" value="BAA83030.2"/>
    <property type="molecule type" value="mRNA"/>
</dbReference>
<dbReference type="EMBL" id="AL110158">
    <property type="protein sequence ID" value="CAB53664.2"/>
    <property type="molecule type" value="mRNA"/>
</dbReference>
<dbReference type="CCDS" id="CCDS1404.1">
    <molecule id="Q08AD1-3"/>
</dbReference>
<dbReference type="CCDS" id="CCDS72998.1">
    <molecule id="Q08AD1-1"/>
</dbReference>
<dbReference type="CCDS" id="CCDS72999.1">
    <molecule id="Q08AD1-2"/>
</dbReference>
<dbReference type="PIR" id="T14744">
    <property type="entry name" value="T14744"/>
</dbReference>
<dbReference type="RefSeq" id="NP_001284636.1">
    <molecule id="Q08AD1-1"/>
    <property type="nucleotide sequence ID" value="NM_001297707.3"/>
</dbReference>
<dbReference type="RefSeq" id="NP_001284637.1">
    <molecule id="Q08AD1-2"/>
    <property type="nucleotide sequence ID" value="NM_001297708.3"/>
</dbReference>
<dbReference type="RefSeq" id="NP_982284.1">
    <molecule id="Q08AD1-3"/>
    <property type="nucleotide sequence ID" value="NM_203459.4"/>
</dbReference>
<dbReference type="SMR" id="Q08AD1"/>
<dbReference type="BioGRID" id="116872">
    <property type="interactions" value="168"/>
</dbReference>
<dbReference type="CORUM" id="Q08AD1"/>
<dbReference type="FunCoup" id="Q08AD1">
    <property type="interactions" value="2210"/>
</dbReference>
<dbReference type="IntAct" id="Q08AD1">
    <property type="interactions" value="47"/>
</dbReference>
<dbReference type="MINT" id="Q08AD1"/>
<dbReference type="STRING" id="9606.ENSP00000236925"/>
<dbReference type="GlyCosmos" id="Q08AD1">
    <property type="glycosylation" value="1 site, 1 glycan"/>
</dbReference>
<dbReference type="GlyGen" id="Q08AD1">
    <property type="glycosylation" value="1 site, 1 O-linked glycan (1 site)"/>
</dbReference>
<dbReference type="iPTMnet" id="Q08AD1"/>
<dbReference type="PhosphoSitePlus" id="Q08AD1"/>
<dbReference type="SwissPalm" id="Q08AD1"/>
<dbReference type="BioMuta" id="CAMSAP2"/>
<dbReference type="DMDM" id="308153626"/>
<dbReference type="jPOST" id="Q08AD1"/>
<dbReference type="MassIVE" id="Q08AD1"/>
<dbReference type="PaxDb" id="9606-ENSP00000236925"/>
<dbReference type="PeptideAtlas" id="Q08AD1"/>
<dbReference type="ProteomicsDB" id="58654">
    <molecule id="Q08AD1-1"/>
</dbReference>
<dbReference type="ProteomicsDB" id="58655">
    <molecule id="Q08AD1-2"/>
</dbReference>
<dbReference type="ProteomicsDB" id="58656">
    <molecule id="Q08AD1-3"/>
</dbReference>
<dbReference type="Pumba" id="Q08AD1"/>
<dbReference type="Antibodypedia" id="20635">
    <property type="antibodies" value="79 antibodies from 19 providers"/>
</dbReference>
<dbReference type="DNASU" id="23271"/>
<dbReference type="Ensembl" id="ENST00000236925.9">
    <molecule id="Q08AD1-1"/>
    <property type="protein sequence ID" value="ENSP00000236925.4"/>
    <property type="gene ID" value="ENSG00000118200.16"/>
</dbReference>
<dbReference type="Ensembl" id="ENST00000358823.7">
    <molecule id="Q08AD1-3"/>
    <property type="protein sequence ID" value="ENSP00000351684.2"/>
    <property type="gene ID" value="ENSG00000118200.16"/>
</dbReference>
<dbReference type="Ensembl" id="ENST00000413307.6">
    <molecule id="Q08AD1-2"/>
    <property type="protein sequence ID" value="ENSP00000416800.2"/>
    <property type="gene ID" value="ENSG00000118200.16"/>
</dbReference>
<dbReference type="GeneID" id="23271"/>
<dbReference type="KEGG" id="hsa:23271"/>
<dbReference type="MANE-Select" id="ENST00000358823.7">
    <molecule id="Q08AD1-3"/>
    <property type="protein sequence ID" value="ENSP00000351684.2"/>
    <property type="RefSeq nucleotide sequence ID" value="NM_203459.4"/>
    <property type="RefSeq protein sequence ID" value="NP_982284.1"/>
</dbReference>
<dbReference type="UCSC" id="uc001gvk.4">
    <molecule id="Q08AD1-1"/>
    <property type="organism name" value="human"/>
</dbReference>
<dbReference type="AGR" id="HGNC:29188"/>
<dbReference type="CTD" id="23271"/>
<dbReference type="DisGeNET" id="23271"/>
<dbReference type="GeneCards" id="CAMSAP2"/>
<dbReference type="HGNC" id="HGNC:29188">
    <property type="gene designation" value="CAMSAP2"/>
</dbReference>
<dbReference type="HPA" id="ENSG00000118200">
    <property type="expression patterns" value="Low tissue specificity"/>
</dbReference>
<dbReference type="MIM" id="613775">
    <property type="type" value="gene"/>
</dbReference>
<dbReference type="neXtProt" id="NX_Q08AD1"/>
<dbReference type="OpenTargets" id="ENSG00000118200"/>
<dbReference type="PharmGKB" id="PA142672206"/>
<dbReference type="VEuPathDB" id="HostDB:ENSG00000118200"/>
<dbReference type="eggNOG" id="KOG3654">
    <property type="taxonomic scope" value="Eukaryota"/>
</dbReference>
<dbReference type="GeneTree" id="ENSGT00950000182975"/>
<dbReference type="HOGENOM" id="CLU_004833_1_0_1"/>
<dbReference type="InParanoid" id="Q08AD1"/>
<dbReference type="OMA" id="KAPQPMG"/>
<dbReference type="OrthoDB" id="2125658at2759"/>
<dbReference type="PAN-GO" id="Q08AD1">
    <property type="GO annotations" value="4 GO annotations based on evolutionary models"/>
</dbReference>
<dbReference type="PhylomeDB" id="Q08AD1"/>
<dbReference type="TreeFam" id="TF315529"/>
<dbReference type="PathwayCommons" id="Q08AD1"/>
<dbReference type="SignaLink" id="Q08AD1"/>
<dbReference type="BioGRID-ORCS" id="23271">
    <property type="hits" value="28 hits in 1150 CRISPR screens"/>
</dbReference>
<dbReference type="ChiTaRS" id="CAMSAP2">
    <property type="organism name" value="human"/>
</dbReference>
<dbReference type="GenomeRNAi" id="23271"/>
<dbReference type="Pharos" id="Q08AD1">
    <property type="development level" value="Tbio"/>
</dbReference>
<dbReference type="PRO" id="PR:Q08AD1"/>
<dbReference type="Proteomes" id="UP000005640">
    <property type="component" value="Chromosome 1"/>
</dbReference>
<dbReference type="RNAct" id="Q08AD1">
    <property type="molecule type" value="protein"/>
</dbReference>
<dbReference type="Bgee" id="ENSG00000118200">
    <property type="expression patterns" value="Expressed in lateral nuclear group of thalamus and 209 other cell types or tissues"/>
</dbReference>
<dbReference type="ExpressionAtlas" id="Q08AD1">
    <property type="expression patterns" value="baseline and differential"/>
</dbReference>
<dbReference type="GO" id="GO:0036064">
    <property type="term" value="C:ciliary basal body"/>
    <property type="evidence" value="ECO:0000250"/>
    <property type="project" value="UniProtKB"/>
</dbReference>
<dbReference type="GO" id="GO:0005829">
    <property type="term" value="C:cytosol"/>
    <property type="evidence" value="ECO:0000314"/>
    <property type="project" value="HPA"/>
</dbReference>
<dbReference type="GO" id="GO:0005794">
    <property type="term" value="C:Golgi apparatus"/>
    <property type="evidence" value="ECO:0000314"/>
    <property type="project" value="HPA"/>
</dbReference>
<dbReference type="GO" id="GO:1990752">
    <property type="term" value="C:microtubule end"/>
    <property type="evidence" value="ECO:0000314"/>
    <property type="project" value="HPA"/>
</dbReference>
<dbReference type="GO" id="GO:0005516">
    <property type="term" value="F:calmodulin binding"/>
    <property type="evidence" value="ECO:0007669"/>
    <property type="project" value="InterPro"/>
</dbReference>
<dbReference type="GO" id="GO:0051011">
    <property type="term" value="F:microtubule minus-end binding"/>
    <property type="evidence" value="ECO:0000314"/>
    <property type="project" value="UniProtKB"/>
</dbReference>
<dbReference type="GO" id="GO:0030507">
    <property type="term" value="F:spectrin binding"/>
    <property type="evidence" value="ECO:0007669"/>
    <property type="project" value="InterPro"/>
</dbReference>
<dbReference type="GO" id="GO:0061564">
    <property type="term" value="P:axon development"/>
    <property type="evidence" value="ECO:0000314"/>
    <property type="project" value="UniProtKB"/>
</dbReference>
<dbReference type="GO" id="GO:0031122">
    <property type="term" value="P:cytoplasmic microtubule organization"/>
    <property type="evidence" value="ECO:0000318"/>
    <property type="project" value="GO_Central"/>
</dbReference>
<dbReference type="GO" id="GO:0000226">
    <property type="term" value="P:microtubule cytoskeleton organization"/>
    <property type="evidence" value="ECO:0000314"/>
    <property type="project" value="UniProtKB"/>
</dbReference>
<dbReference type="GO" id="GO:0007026">
    <property type="term" value="P:negative regulation of microtubule depolymerization"/>
    <property type="evidence" value="ECO:0000318"/>
    <property type="project" value="GO_Central"/>
</dbReference>
<dbReference type="GO" id="GO:0050773">
    <property type="term" value="P:regulation of dendrite development"/>
    <property type="evidence" value="ECO:0000314"/>
    <property type="project" value="UniProtKB"/>
</dbReference>
<dbReference type="GO" id="GO:1903358">
    <property type="term" value="P:regulation of Golgi organization"/>
    <property type="evidence" value="ECO:0000314"/>
    <property type="project" value="UniProtKB"/>
</dbReference>
<dbReference type="GO" id="GO:0031113">
    <property type="term" value="P:regulation of microtubule polymerization"/>
    <property type="evidence" value="ECO:0000314"/>
    <property type="project" value="UniProtKB"/>
</dbReference>
<dbReference type="GO" id="GO:0033043">
    <property type="term" value="P:regulation of organelle organization"/>
    <property type="evidence" value="ECO:0000315"/>
    <property type="project" value="UniProtKB"/>
</dbReference>
<dbReference type="FunFam" id="3.10.20.360:FF:000001">
    <property type="entry name" value="Calmodulin-regulated spectrin-associated protein 3 isoform 2"/>
    <property type="match status" value="1"/>
</dbReference>
<dbReference type="Gene3D" id="3.10.20.360">
    <property type="entry name" value="CKK domain"/>
    <property type="match status" value="1"/>
</dbReference>
<dbReference type="InterPro" id="IPR032940">
    <property type="entry name" value="CAMSAP"/>
</dbReference>
<dbReference type="InterPro" id="IPR022613">
    <property type="entry name" value="CAMSAP-like_CH_dom"/>
</dbReference>
<dbReference type="InterPro" id="IPR031372">
    <property type="entry name" value="CAMSAP_CC1"/>
</dbReference>
<dbReference type="InterPro" id="IPR001715">
    <property type="entry name" value="CH_dom"/>
</dbReference>
<dbReference type="InterPro" id="IPR036872">
    <property type="entry name" value="CH_dom_sf"/>
</dbReference>
<dbReference type="InterPro" id="IPR038209">
    <property type="entry name" value="CKK_dom_sf"/>
</dbReference>
<dbReference type="InterPro" id="IPR014797">
    <property type="entry name" value="CKK_domain"/>
</dbReference>
<dbReference type="InterPro" id="IPR011033">
    <property type="entry name" value="PRC_barrel-like_sf"/>
</dbReference>
<dbReference type="PANTHER" id="PTHR21595:SF1">
    <property type="entry name" value="CALMODULIN-REGULATED SPECTRIN-ASSOCIATED PROTEIN 2"/>
    <property type="match status" value="1"/>
</dbReference>
<dbReference type="PANTHER" id="PTHR21595">
    <property type="entry name" value="PATRONIN"/>
    <property type="match status" value="1"/>
</dbReference>
<dbReference type="Pfam" id="PF17095">
    <property type="entry name" value="CAMSAP_CC1"/>
    <property type="match status" value="1"/>
</dbReference>
<dbReference type="Pfam" id="PF11971">
    <property type="entry name" value="CAMSAP_CH"/>
    <property type="match status" value="1"/>
</dbReference>
<dbReference type="Pfam" id="PF08683">
    <property type="entry name" value="CAMSAP_CKK"/>
    <property type="match status" value="1"/>
</dbReference>
<dbReference type="SMART" id="SM01051">
    <property type="entry name" value="CAMSAP_CKK"/>
    <property type="match status" value="1"/>
</dbReference>
<dbReference type="SUPFAM" id="SSF47576">
    <property type="entry name" value="Calponin-homology domain, CH-domain"/>
    <property type="match status" value="1"/>
</dbReference>
<dbReference type="SUPFAM" id="SSF50346">
    <property type="entry name" value="PRC-barrel domain"/>
    <property type="match status" value="1"/>
</dbReference>
<dbReference type="PROSITE" id="PS50021">
    <property type="entry name" value="CH"/>
    <property type="match status" value="1"/>
</dbReference>
<dbReference type="PROSITE" id="PS51508">
    <property type="entry name" value="CKK"/>
    <property type="match status" value="1"/>
</dbReference>
<keyword id="KW-0025">Alternative splicing</keyword>
<keyword id="KW-0966">Cell projection</keyword>
<keyword id="KW-0175">Coiled coil</keyword>
<keyword id="KW-0963">Cytoplasm</keyword>
<keyword id="KW-0206">Cytoskeleton</keyword>
<keyword id="KW-0333">Golgi apparatus</keyword>
<keyword id="KW-0493">Microtubule</keyword>
<keyword id="KW-0597">Phosphoprotein</keyword>
<keyword id="KW-1267">Proteomics identification</keyword>
<keyword id="KW-1185">Reference proteome</keyword>
<comment type="function">
    <text evidence="7 8 9 10 11 12">Key microtubule-organizing protein that specifically binds the minus-end of non-centrosomal microtubules and regulates their dynamics and organization (PubMed:23169647, PubMed:24486153, PubMed:24706919). Specifically recognizes growing microtubule minus-ends and autonomously decorates and stabilizes microtubule lattice formed by microtubule minus-end polymerization (PubMed:24486153, PubMed:24706919). Acts on free microtubule minus-ends that are not capped by microtubule-nucleating proteins or other factors and protects microtubule minus-ends from depolymerization (PubMed:24486153, PubMed:24706919). In addition, it also reduces the velocity of microtubule polymerization (PubMed:24486153, PubMed:24706919). Through the microtubule cytoskeleton, also regulates the organization of cellular organelles including the Golgi and the early endosomes (PubMed:27666745). Essential for the tethering, but not for nucleation of non-centrosomal microtubules at the Golgi: together with Golgi-associated proteins AKAP9 and PDE4DIP, required to tether non-centrosomal minus-end microtubules to the Golgi, an important step for polarized cell movement (PubMed:27666745). Also acts as a regulator of neuronal polarity and development: localizes to non-centrosomal microtubule minus-ends in neurons and stabilizes non-centrosomal microtubules, which is required for neuronal polarity, axon specification and dendritic branch formation (PubMed:24908486). Through the microtubule cytoskeleton, regulates the autophagosome transport (PubMed:28726242).</text>
</comment>
<comment type="subunit">
    <text evidence="1 8 11 12 13">Interacts with CAMSAP3 (By similarity). Interacts with KATNA1 and KATNB1; leading to regulate the length of CAMSAP2-decorated microtubule stretches (PubMed:24486153). Interacts with a complex formed by AKAP9 and PDE4DIP isoform 13/MMG8/SMYLE, which recruits CAMSAP2 to the Golgi (PubMed:27666745, PubMed:28814570). Interacts with MAPRE1/EB1 (PubMed:28726242, PubMed:28814570).</text>
</comment>
<comment type="interaction">
    <interactant intactId="EBI-1051869">
        <id>Q08AD1</id>
    </interactant>
    <interactant intactId="EBI-358607">
        <id>P29692</id>
        <label>EEF1D</label>
    </interactant>
    <organismsDiffer>false</organismsDiffer>
    <experiments>2</experiments>
</comment>
<comment type="subcellular location">
    <subcellularLocation>
        <location evidence="7 8 9 10 11 13">Cytoplasm</location>
        <location evidence="7 8 9 10 11 13">Cytoskeleton</location>
    </subcellularLocation>
    <subcellularLocation>
        <location evidence="11">Golgi apparatus</location>
    </subcellularLocation>
    <subcellularLocation>
        <location evidence="1">Cytoplasm</location>
        <location evidence="1">Cytoskeleton</location>
        <location evidence="1">Cilium basal body</location>
    </subcellularLocation>
    <subcellularLocation>
        <location evidence="1">Cytoplasm</location>
    </subcellularLocation>
    <text evidence="7 8 9 11 13">Associated with the minus-end of microtubules and also detected at the centrosomes (PubMed:23169647, PubMed:24486153, PubMed:24706919, PubMed:24908486, PubMed:27666745, PubMed:28814570). Decorates the minus-end of microtubules by decreasing the rate of tubulin incorporation and remaining bound (PubMed:24486153). The length of CAMSAP2-decorated stretches on the minus-end of microtubules depends on MAPRE1/EB1 and MAPRE3/EB3, which promote elongation of CAMSAP2-decorated microtubule stretches (PubMed:28814570). Recruited to the Golgi apparatus by AKAP9 and PDE4DIP isoform 13/MMG8/SMYLE (PubMed:27666745). In neurons, localizes to the minus-end of microtubules in axon and dendrites (PubMed:24908486).</text>
</comment>
<comment type="alternative products">
    <event type="alternative splicing"/>
    <isoform>
        <id>Q08AD1-1</id>
        <name>1</name>
        <sequence type="displayed"/>
    </isoform>
    <isoform>
        <id>Q08AD1-2</id>
        <name>2</name>
        <sequence type="described" ref="VSP_030805 VSP_030806"/>
    </isoform>
    <isoform>
        <id>Q08AD1-3</id>
        <name>3</name>
        <sequence type="described" ref="VSP_030805"/>
    </isoform>
</comment>
<comment type="domain">
    <text evidence="4 8">The CKK domain binds microtubules and specifically recognizes the minus-end of microtubules (PubMed:24486153).</text>
</comment>
<comment type="domain">
    <text evidence="8">The MBD (microtubule-binding domain) region can recognize some features of the microtubule lattice, which might contribute to the specific decoration of growing microtubule minus-ends by CAMSAP2.</text>
</comment>
<comment type="disease">
    <text evidence="17">Defects in CAMSAP2 may be a cause of susceptibility to epilepsy in the Chinese population.</text>
</comment>
<comment type="similarity">
    <text evidence="4">Belongs to the CAMSAP1 family.</text>
</comment>
<comment type="sequence caution" evidence="16">
    <conflict type="erroneous initiation">
        <sequence resource="EMBL-CDS" id="AAH56910"/>
    </conflict>
    <text>Truncated N-terminus.</text>
</comment>
<accession>Q08AD1</accession>
<accession>B1APG6</accession>
<accession>Q08AD2</accession>
<accession>Q6PGN8</accession>
<accession>Q96FB3</accession>
<accession>Q9UG20</accession>
<accession>Q9UPS4</accession>
<proteinExistence type="evidence at protein level"/>